<comment type="function">
    <text evidence="1">Required for maturation of urease via the functional incorporation of the urease nickel metallocenter.</text>
</comment>
<comment type="subunit">
    <text evidence="1">UreD, UreF and UreG form a complex that acts as a GTP-hydrolysis-dependent molecular chaperone, activating the urease apoprotein by helping to assemble the nickel containing metallocenter of UreC. The UreE protein probably delivers the nickel.</text>
</comment>
<comment type="subcellular location">
    <subcellularLocation>
        <location evidence="1">Cytoplasm</location>
    </subcellularLocation>
</comment>
<comment type="similarity">
    <text evidence="1">Belongs to the UreF family.</text>
</comment>
<proteinExistence type="inferred from homology"/>
<gene>
    <name evidence="1" type="primary">ureF</name>
</gene>
<evidence type="ECO:0000255" key="1">
    <source>
        <dbReference type="HAMAP-Rule" id="MF_01385"/>
    </source>
</evidence>
<sequence>MNRLLSLFQLCDSNFPSGSFSHSFGLETYIQEKVITDKESFKNAISVYIRKQLFFTEGLACILAYEAMEKNEPSALVELDHILFASNVAQETRSGNQRMGERMAKLCVDLYPSPILIEYTNRIKEKKAYGHSAIVFAIVAYHLKVTKETAVGAYLFANVSALVQNAVRGIPIGQTDGQRILVEIQPLLEEGVRTISQLPKEDLGAVSPGMEIAQMRHERLNVRLFMS</sequence>
<feature type="chain" id="PRO_0000067645" description="Urease accessory protein UreF">
    <location>
        <begin position="1"/>
        <end position="227"/>
    </location>
</feature>
<dbReference type="EMBL" id="D14439">
    <property type="protein sequence ID" value="BAA03327.1"/>
    <property type="molecule type" value="Genomic_DNA"/>
</dbReference>
<dbReference type="PIR" id="E36950">
    <property type="entry name" value="E36950"/>
</dbReference>
<dbReference type="SMR" id="Q07402"/>
<dbReference type="GO" id="GO:0005737">
    <property type="term" value="C:cytoplasm"/>
    <property type="evidence" value="ECO:0007669"/>
    <property type="project" value="UniProtKB-SubCell"/>
</dbReference>
<dbReference type="GO" id="GO:0016151">
    <property type="term" value="F:nickel cation binding"/>
    <property type="evidence" value="ECO:0007669"/>
    <property type="project" value="UniProtKB-UniRule"/>
</dbReference>
<dbReference type="Gene3D" id="1.10.4190.10">
    <property type="entry name" value="Urease accessory protein UreF"/>
    <property type="match status" value="1"/>
</dbReference>
<dbReference type="HAMAP" id="MF_01385">
    <property type="entry name" value="UreF"/>
    <property type="match status" value="1"/>
</dbReference>
<dbReference type="InterPro" id="IPR002639">
    <property type="entry name" value="UreF"/>
</dbReference>
<dbReference type="InterPro" id="IPR038277">
    <property type="entry name" value="UreF_sf"/>
</dbReference>
<dbReference type="PANTHER" id="PTHR33620">
    <property type="entry name" value="UREASE ACCESSORY PROTEIN F"/>
    <property type="match status" value="1"/>
</dbReference>
<dbReference type="PANTHER" id="PTHR33620:SF1">
    <property type="entry name" value="UREASE ACCESSORY PROTEIN F"/>
    <property type="match status" value="1"/>
</dbReference>
<dbReference type="Pfam" id="PF01730">
    <property type="entry name" value="UreF"/>
    <property type="match status" value="1"/>
</dbReference>
<dbReference type="PIRSF" id="PIRSF009467">
    <property type="entry name" value="Ureas_acces_UreF"/>
    <property type="match status" value="1"/>
</dbReference>
<protein>
    <recommendedName>
        <fullName evidence="1">Urease accessory protein UreF</fullName>
    </recommendedName>
</protein>
<accession>Q07402</accession>
<keyword id="KW-0143">Chaperone</keyword>
<keyword id="KW-0963">Cytoplasm</keyword>
<keyword id="KW-0996">Nickel insertion</keyword>
<name>UREF_BACSB</name>
<organism>
    <name type="scientific">Bacillus sp. (strain TB-90)</name>
    <dbReference type="NCBI Taxonomy" id="36824"/>
    <lineage>
        <taxon>Bacteria</taxon>
        <taxon>Bacillati</taxon>
        <taxon>Bacillota</taxon>
        <taxon>Bacilli</taxon>
        <taxon>Bacillales</taxon>
        <taxon>Bacillaceae</taxon>
        <taxon>Bacillus</taxon>
    </lineage>
</organism>
<reference key="1">
    <citation type="journal article" date="1994" name="J. Bacteriol.">
        <title>Cloning, sequencing, and expression of thermophilic Bacillus sp. strain TB-90 urease gene complex in Escherichia coli.</title>
        <authorList>
            <person name="Maeda M."/>
            <person name="Hidaka M."/>
            <person name="Nakamura A."/>
            <person name="Masaki H."/>
            <person name="Uozumi T."/>
        </authorList>
    </citation>
    <scope>NUCLEOTIDE SEQUENCE [GENOMIC DNA]</scope>
</reference>